<proteinExistence type="predicted"/>
<organism>
    <name type="scientific">Bacillus subtilis (strain 168)</name>
    <dbReference type="NCBI Taxonomy" id="224308"/>
    <lineage>
        <taxon>Bacteria</taxon>
        <taxon>Bacillati</taxon>
        <taxon>Bacillota</taxon>
        <taxon>Bacilli</taxon>
        <taxon>Bacillales</taxon>
        <taxon>Bacillaceae</taxon>
        <taxon>Bacillus</taxon>
    </lineage>
</organism>
<accession>O31659</accession>
<protein>
    <recommendedName>
        <fullName>Uncharacterized protein YkzE</fullName>
    </recommendedName>
</protein>
<dbReference type="EMBL" id="AL009126">
    <property type="protein sequence ID" value="CAB13224.1"/>
    <property type="molecule type" value="Genomic_DNA"/>
</dbReference>
<dbReference type="PIR" id="B69871">
    <property type="entry name" value="B69871"/>
</dbReference>
<dbReference type="RefSeq" id="NP_389234.1">
    <property type="nucleotide sequence ID" value="NC_000964.3"/>
</dbReference>
<dbReference type="RefSeq" id="WP_003245411.1">
    <property type="nucleotide sequence ID" value="NZ_OZ025638.1"/>
</dbReference>
<dbReference type="FunCoup" id="O31659">
    <property type="interactions" value="105"/>
</dbReference>
<dbReference type="STRING" id="224308.BSU13510"/>
<dbReference type="PaxDb" id="224308-BSU13510"/>
<dbReference type="EnsemblBacteria" id="CAB13224">
    <property type="protein sequence ID" value="CAB13224"/>
    <property type="gene ID" value="BSU_13510"/>
</dbReference>
<dbReference type="GeneID" id="939354"/>
<dbReference type="KEGG" id="bsu:BSU13510"/>
<dbReference type="PATRIC" id="fig|224308.179.peg.1467"/>
<dbReference type="eggNOG" id="ENOG5030D5G">
    <property type="taxonomic scope" value="Bacteria"/>
</dbReference>
<dbReference type="InParanoid" id="O31659"/>
<dbReference type="OrthoDB" id="2906473at2"/>
<dbReference type="BioCyc" id="BSUB:BSU13510-MONOMER"/>
<dbReference type="Proteomes" id="UP000001570">
    <property type="component" value="Chromosome"/>
</dbReference>
<feature type="chain" id="PRO_0000390301" description="Uncharacterized protein YkzE">
    <location>
        <begin position="1"/>
        <end position="58"/>
    </location>
</feature>
<feature type="region of interest" description="Disordered" evidence="1">
    <location>
        <begin position="1"/>
        <end position="20"/>
    </location>
</feature>
<feature type="region of interest" description="Disordered" evidence="1">
    <location>
        <begin position="38"/>
        <end position="58"/>
    </location>
</feature>
<sequence>MKKNRHSRDMQNHKKPMNKKVLEEEFSSELGDYNAGKIIETLEVTKPEKKKEKNKKQQ</sequence>
<keyword id="KW-1185">Reference proteome</keyword>
<name>YKZE_BACSU</name>
<reference key="1">
    <citation type="journal article" date="1997" name="Nature">
        <title>The complete genome sequence of the Gram-positive bacterium Bacillus subtilis.</title>
        <authorList>
            <person name="Kunst F."/>
            <person name="Ogasawara N."/>
            <person name="Moszer I."/>
            <person name="Albertini A.M."/>
            <person name="Alloni G."/>
            <person name="Azevedo V."/>
            <person name="Bertero M.G."/>
            <person name="Bessieres P."/>
            <person name="Bolotin A."/>
            <person name="Borchert S."/>
            <person name="Borriss R."/>
            <person name="Boursier L."/>
            <person name="Brans A."/>
            <person name="Braun M."/>
            <person name="Brignell S.C."/>
            <person name="Bron S."/>
            <person name="Brouillet S."/>
            <person name="Bruschi C.V."/>
            <person name="Caldwell B."/>
            <person name="Capuano V."/>
            <person name="Carter N.M."/>
            <person name="Choi S.-K."/>
            <person name="Codani J.-J."/>
            <person name="Connerton I.F."/>
            <person name="Cummings N.J."/>
            <person name="Daniel R.A."/>
            <person name="Denizot F."/>
            <person name="Devine K.M."/>
            <person name="Duesterhoeft A."/>
            <person name="Ehrlich S.D."/>
            <person name="Emmerson P.T."/>
            <person name="Entian K.-D."/>
            <person name="Errington J."/>
            <person name="Fabret C."/>
            <person name="Ferrari E."/>
            <person name="Foulger D."/>
            <person name="Fritz C."/>
            <person name="Fujita M."/>
            <person name="Fujita Y."/>
            <person name="Fuma S."/>
            <person name="Galizzi A."/>
            <person name="Galleron N."/>
            <person name="Ghim S.-Y."/>
            <person name="Glaser P."/>
            <person name="Goffeau A."/>
            <person name="Golightly E.J."/>
            <person name="Grandi G."/>
            <person name="Guiseppi G."/>
            <person name="Guy B.J."/>
            <person name="Haga K."/>
            <person name="Haiech J."/>
            <person name="Harwood C.R."/>
            <person name="Henaut A."/>
            <person name="Hilbert H."/>
            <person name="Holsappel S."/>
            <person name="Hosono S."/>
            <person name="Hullo M.-F."/>
            <person name="Itaya M."/>
            <person name="Jones L.-M."/>
            <person name="Joris B."/>
            <person name="Karamata D."/>
            <person name="Kasahara Y."/>
            <person name="Klaerr-Blanchard M."/>
            <person name="Klein C."/>
            <person name="Kobayashi Y."/>
            <person name="Koetter P."/>
            <person name="Koningstein G."/>
            <person name="Krogh S."/>
            <person name="Kumano M."/>
            <person name="Kurita K."/>
            <person name="Lapidus A."/>
            <person name="Lardinois S."/>
            <person name="Lauber J."/>
            <person name="Lazarevic V."/>
            <person name="Lee S.-M."/>
            <person name="Levine A."/>
            <person name="Liu H."/>
            <person name="Masuda S."/>
            <person name="Mauel C."/>
            <person name="Medigue C."/>
            <person name="Medina N."/>
            <person name="Mellado R.P."/>
            <person name="Mizuno M."/>
            <person name="Moestl D."/>
            <person name="Nakai S."/>
            <person name="Noback M."/>
            <person name="Noone D."/>
            <person name="O'Reilly M."/>
            <person name="Ogawa K."/>
            <person name="Ogiwara A."/>
            <person name="Oudega B."/>
            <person name="Park S.-H."/>
            <person name="Parro V."/>
            <person name="Pohl T.M."/>
            <person name="Portetelle D."/>
            <person name="Porwollik S."/>
            <person name="Prescott A.M."/>
            <person name="Presecan E."/>
            <person name="Pujic P."/>
            <person name="Purnelle B."/>
            <person name="Rapoport G."/>
            <person name="Rey M."/>
            <person name="Reynolds S."/>
            <person name="Rieger M."/>
            <person name="Rivolta C."/>
            <person name="Rocha E."/>
            <person name="Roche B."/>
            <person name="Rose M."/>
            <person name="Sadaie Y."/>
            <person name="Sato T."/>
            <person name="Scanlan E."/>
            <person name="Schleich S."/>
            <person name="Schroeter R."/>
            <person name="Scoffone F."/>
            <person name="Sekiguchi J."/>
            <person name="Sekowska A."/>
            <person name="Seror S.J."/>
            <person name="Serror P."/>
            <person name="Shin B.-S."/>
            <person name="Soldo B."/>
            <person name="Sorokin A."/>
            <person name="Tacconi E."/>
            <person name="Takagi T."/>
            <person name="Takahashi H."/>
            <person name="Takemaru K."/>
            <person name="Takeuchi M."/>
            <person name="Tamakoshi A."/>
            <person name="Tanaka T."/>
            <person name="Terpstra P."/>
            <person name="Tognoni A."/>
            <person name="Tosato V."/>
            <person name="Uchiyama S."/>
            <person name="Vandenbol M."/>
            <person name="Vannier F."/>
            <person name="Vassarotti A."/>
            <person name="Viari A."/>
            <person name="Wambutt R."/>
            <person name="Wedler E."/>
            <person name="Wedler H."/>
            <person name="Weitzenegger T."/>
            <person name="Winters P."/>
            <person name="Wipat A."/>
            <person name="Yamamoto H."/>
            <person name="Yamane K."/>
            <person name="Yasumoto K."/>
            <person name="Yata K."/>
            <person name="Yoshida K."/>
            <person name="Yoshikawa H.-F."/>
            <person name="Zumstein E."/>
            <person name="Yoshikawa H."/>
            <person name="Danchin A."/>
        </authorList>
    </citation>
    <scope>NUCLEOTIDE SEQUENCE [LARGE SCALE GENOMIC DNA]</scope>
    <source>
        <strain>168</strain>
    </source>
</reference>
<gene>
    <name type="primary">ykzE</name>
    <name type="ordered locus">BSU13510</name>
</gene>
<evidence type="ECO:0000256" key="1">
    <source>
        <dbReference type="SAM" id="MobiDB-lite"/>
    </source>
</evidence>